<reference key="1">
    <citation type="submission" date="2007-11" db="EMBL/GenBank/DDBJ databases">
        <authorList>
            <consortium name="The Salmonella enterica serovar Arizonae Genome Sequencing Project"/>
            <person name="McClelland M."/>
            <person name="Sanderson E.K."/>
            <person name="Porwollik S."/>
            <person name="Spieth J."/>
            <person name="Clifton W.S."/>
            <person name="Fulton R."/>
            <person name="Chunyan W."/>
            <person name="Wollam A."/>
            <person name="Shah N."/>
            <person name="Pepin K."/>
            <person name="Bhonagiri V."/>
            <person name="Nash W."/>
            <person name="Johnson M."/>
            <person name="Thiruvilangam P."/>
            <person name="Wilson R."/>
        </authorList>
    </citation>
    <scope>NUCLEOTIDE SEQUENCE [LARGE SCALE GENOMIC DNA]</scope>
    <source>
        <strain>ATCC BAA-731 / CDC346-86 / RSK2980</strain>
    </source>
</reference>
<name>6PGL_SALAR</name>
<feature type="chain" id="PRO_1000088030" description="6-phosphogluconolactonase">
    <location>
        <begin position="1"/>
        <end position="331"/>
    </location>
</feature>
<keyword id="KW-0119">Carbohydrate metabolism</keyword>
<keyword id="KW-0313">Glucose metabolism</keyword>
<keyword id="KW-0378">Hydrolase</keyword>
<keyword id="KW-1185">Reference proteome</keyword>
<dbReference type="EC" id="3.1.1.31" evidence="1"/>
<dbReference type="EMBL" id="CP000880">
    <property type="protein sequence ID" value="ABX22034.1"/>
    <property type="molecule type" value="Genomic_DNA"/>
</dbReference>
<dbReference type="SMR" id="A9MJH1"/>
<dbReference type="STRING" id="41514.SARI_02157"/>
<dbReference type="KEGG" id="ses:SARI_02157"/>
<dbReference type="HOGENOM" id="CLU_038716_2_0_6"/>
<dbReference type="UniPathway" id="UPA00115">
    <property type="reaction ID" value="UER00409"/>
</dbReference>
<dbReference type="Proteomes" id="UP000002084">
    <property type="component" value="Chromosome"/>
</dbReference>
<dbReference type="GO" id="GO:0005829">
    <property type="term" value="C:cytosol"/>
    <property type="evidence" value="ECO:0007669"/>
    <property type="project" value="TreeGrafter"/>
</dbReference>
<dbReference type="GO" id="GO:0017057">
    <property type="term" value="F:6-phosphogluconolactonase activity"/>
    <property type="evidence" value="ECO:0007669"/>
    <property type="project" value="UniProtKB-UniRule"/>
</dbReference>
<dbReference type="GO" id="GO:0006006">
    <property type="term" value="P:glucose metabolic process"/>
    <property type="evidence" value="ECO:0007669"/>
    <property type="project" value="UniProtKB-KW"/>
</dbReference>
<dbReference type="GO" id="GO:0009051">
    <property type="term" value="P:pentose-phosphate shunt, oxidative branch"/>
    <property type="evidence" value="ECO:0007669"/>
    <property type="project" value="UniProtKB-UniRule"/>
</dbReference>
<dbReference type="FunFam" id="2.130.10.10:FF:000051">
    <property type="entry name" value="6-phosphogluconolactonase"/>
    <property type="match status" value="1"/>
</dbReference>
<dbReference type="Gene3D" id="2.130.10.10">
    <property type="entry name" value="YVTN repeat-like/Quinoprotein amine dehydrogenase"/>
    <property type="match status" value="1"/>
</dbReference>
<dbReference type="HAMAP" id="MF_01605">
    <property type="entry name" value="6P_gluconolactonase"/>
    <property type="match status" value="1"/>
</dbReference>
<dbReference type="InterPro" id="IPR022528">
    <property type="entry name" value="6-phosphogluconolactonase_YbhE"/>
</dbReference>
<dbReference type="InterPro" id="IPR050282">
    <property type="entry name" value="Cycloisomerase_2"/>
</dbReference>
<dbReference type="InterPro" id="IPR019405">
    <property type="entry name" value="Lactonase_7-beta_prop"/>
</dbReference>
<dbReference type="InterPro" id="IPR011045">
    <property type="entry name" value="N2O_reductase_N"/>
</dbReference>
<dbReference type="InterPro" id="IPR015943">
    <property type="entry name" value="WD40/YVTN_repeat-like_dom_sf"/>
</dbReference>
<dbReference type="NCBIfam" id="NF008258">
    <property type="entry name" value="PRK11028.1"/>
    <property type="match status" value="1"/>
</dbReference>
<dbReference type="PANTHER" id="PTHR30344:SF1">
    <property type="entry name" value="6-PHOSPHOGLUCONOLACTONASE"/>
    <property type="match status" value="1"/>
</dbReference>
<dbReference type="PANTHER" id="PTHR30344">
    <property type="entry name" value="6-PHOSPHOGLUCONOLACTONASE-RELATED"/>
    <property type="match status" value="1"/>
</dbReference>
<dbReference type="Pfam" id="PF10282">
    <property type="entry name" value="Lactonase"/>
    <property type="match status" value="1"/>
</dbReference>
<dbReference type="SUPFAM" id="SSF50974">
    <property type="entry name" value="Nitrous oxide reductase, N-terminal domain"/>
    <property type="match status" value="2"/>
</dbReference>
<evidence type="ECO:0000255" key="1">
    <source>
        <dbReference type="HAMAP-Rule" id="MF_01605"/>
    </source>
</evidence>
<organism>
    <name type="scientific">Salmonella arizonae (strain ATCC BAA-731 / CDC346-86 / RSK2980)</name>
    <dbReference type="NCBI Taxonomy" id="41514"/>
    <lineage>
        <taxon>Bacteria</taxon>
        <taxon>Pseudomonadati</taxon>
        <taxon>Pseudomonadota</taxon>
        <taxon>Gammaproteobacteria</taxon>
        <taxon>Enterobacterales</taxon>
        <taxon>Enterobacteriaceae</taxon>
        <taxon>Salmonella</taxon>
    </lineage>
</organism>
<comment type="function">
    <text evidence="1">Catalyzes the hydrolysis of 6-phosphogluconolactone to 6-phosphogluconate.</text>
</comment>
<comment type="catalytic activity">
    <reaction evidence="1">
        <text>6-phospho-D-glucono-1,5-lactone + H2O = 6-phospho-D-gluconate + H(+)</text>
        <dbReference type="Rhea" id="RHEA:12556"/>
        <dbReference type="ChEBI" id="CHEBI:15377"/>
        <dbReference type="ChEBI" id="CHEBI:15378"/>
        <dbReference type="ChEBI" id="CHEBI:57955"/>
        <dbReference type="ChEBI" id="CHEBI:58759"/>
        <dbReference type="EC" id="3.1.1.31"/>
    </reaction>
</comment>
<comment type="pathway">
    <text evidence="1">Carbohydrate degradation; pentose phosphate pathway; D-ribulose 5-phosphate from D-glucose 6-phosphate (oxidative stage): step 2/3.</text>
</comment>
<comment type="similarity">
    <text evidence="1">Belongs to the cycloisomerase 2 family.</text>
</comment>
<proteinExistence type="inferred from homology"/>
<accession>A9MJH1</accession>
<protein>
    <recommendedName>
        <fullName evidence="1">6-phosphogluconolactonase</fullName>
        <shortName evidence="1">6-P-gluconolactonase</shortName>
        <ecNumber evidence="1">3.1.1.31</ecNumber>
    </recommendedName>
</protein>
<sequence length="331" mass="36378">MKQTVYTASPESQQIHVWSLNHEGMLTLVQVVDVPGQVQPMVVSPDKRYLYVGVRPEFRVLAYRIAPDDGALTFATESALPGSPTHISTDHHGRFVFVGSYNAGNVSVTRLQDGLPVELVDVVEGLDGCHSANITPDNRTLWVPALKQDRIALFTLSDDGYLAAQEPAEVNTVEGAGPRHMVFHPNQQYAYCVNELNSSVDVWQLKNPHGEIECVQTLDMMPADFSDTRWAADIHITPDGRHLYACDRTASLITVFSVSEDGSVLSVEGFQPTETQPRGFNIDHHGKYLIAAGQKSHHIAVYEIAGAQGLLTEKGRYAVGQGPMWVVVNAY</sequence>
<gene>
    <name evidence="1" type="primary">pgl</name>
    <name type="ordered locus">SARI_02157</name>
</gene>